<organism>
    <name type="scientific">Salmonella heidelberg (strain SL476)</name>
    <dbReference type="NCBI Taxonomy" id="454169"/>
    <lineage>
        <taxon>Bacteria</taxon>
        <taxon>Pseudomonadati</taxon>
        <taxon>Pseudomonadota</taxon>
        <taxon>Gammaproteobacteria</taxon>
        <taxon>Enterobacterales</taxon>
        <taxon>Enterobacteriaceae</taxon>
        <taxon>Salmonella</taxon>
    </lineage>
</organism>
<keyword id="KW-0068">Autocatalytic cleavage</keyword>
<keyword id="KW-0227">DNA damage</keyword>
<keyword id="KW-0234">DNA repair</keyword>
<keyword id="KW-0235">DNA replication</keyword>
<keyword id="KW-0238">DNA-binding</keyword>
<keyword id="KW-0378">Hydrolase</keyword>
<keyword id="KW-0678">Repressor</keyword>
<keyword id="KW-0742">SOS response</keyword>
<keyword id="KW-0804">Transcription</keyword>
<keyword id="KW-0805">Transcription regulation</keyword>
<gene>
    <name evidence="1" type="primary">lexA</name>
    <name type="ordered locus">SeHA_C4579</name>
</gene>
<accession>B4TDM0</accession>
<evidence type="ECO:0000255" key="1">
    <source>
        <dbReference type="HAMAP-Rule" id="MF_00015"/>
    </source>
</evidence>
<proteinExistence type="inferred from homology"/>
<feature type="chain" id="PRO_1000089594" description="LexA repressor">
    <location>
        <begin position="1"/>
        <end position="202"/>
    </location>
</feature>
<feature type="DNA-binding region" description="H-T-H motif" evidence="1">
    <location>
        <begin position="28"/>
        <end position="48"/>
    </location>
</feature>
<feature type="active site" description="For autocatalytic cleavage activity" evidence="1">
    <location>
        <position position="119"/>
    </location>
</feature>
<feature type="active site" description="For autocatalytic cleavage activity" evidence="1">
    <location>
        <position position="156"/>
    </location>
</feature>
<feature type="site" description="Cleavage; by autolysis" evidence="1">
    <location>
        <begin position="84"/>
        <end position="85"/>
    </location>
</feature>
<sequence>MKALTARQQEVFDLIRDHISQTGMPPTRAEIAQRLGFRSPNAAEEHLKALARKGVLEIVSGASRGIRLLQEEEDGLPLVGRVAAGEPLLAQQHIEGHYQVDPSLFKPSADFLLRVSGMSMKDIGIMDGDLLAVHKTQDVRNGQVVVARIDDEVTVKRLKKQGNKVELLPENSEFTPIVVDLREQSFTIEGLAVGVIRNGEWL</sequence>
<dbReference type="EC" id="3.4.21.88" evidence="1"/>
<dbReference type="EMBL" id="CP001120">
    <property type="protein sequence ID" value="ACF68362.1"/>
    <property type="molecule type" value="Genomic_DNA"/>
</dbReference>
<dbReference type="RefSeq" id="WP_000646079.1">
    <property type="nucleotide sequence ID" value="NC_011083.1"/>
</dbReference>
<dbReference type="SMR" id="B4TDM0"/>
<dbReference type="MEROPS" id="S24.001"/>
<dbReference type="KEGG" id="seh:SeHA_C4579"/>
<dbReference type="HOGENOM" id="CLU_066192_45_3_6"/>
<dbReference type="Proteomes" id="UP000001866">
    <property type="component" value="Chromosome"/>
</dbReference>
<dbReference type="GO" id="GO:0003677">
    <property type="term" value="F:DNA binding"/>
    <property type="evidence" value="ECO:0007669"/>
    <property type="project" value="UniProtKB-UniRule"/>
</dbReference>
<dbReference type="GO" id="GO:0004252">
    <property type="term" value="F:serine-type endopeptidase activity"/>
    <property type="evidence" value="ECO:0007669"/>
    <property type="project" value="UniProtKB-UniRule"/>
</dbReference>
<dbReference type="GO" id="GO:0006281">
    <property type="term" value="P:DNA repair"/>
    <property type="evidence" value="ECO:0007669"/>
    <property type="project" value="UniProtKB-UniRule"/>
</dbReference>
<dbReference type="GO" id="GO:0006260">
    <property type="term" value="P:DNA replication"/>
    <property type="evidence" value="ECO:0007669"/>
    <property type="project" value="UniProtKB-UniRule"/>
</dbReference>
<dbReference type="GO" id="GO:0045892">
    <property type="term" value="P:negative regulation of DNA-templated transcription"/>
    <property type="evidence" value="ECO:0007669"/>
    <property type="project" value="UniProtKB-UniRule"/>
</dbReference>
<dbReference type="GO" id="GO:0006508">
    <property type="term" value="P:proteolysis"/>
    <property type="evidence" value="ECO:0007669"/>
    <property type="project" value="InterPro"/>
</dbReference>
<dbReference type="GO" id="GO:0009432">
    <property type="term" value="P:SOS response"/>
    <property type="evidence" value="ECO:0007669"/>
    <property type="project" value="UniProtKB-UniRule"/>
</dbReference>
<dbReference type="CDD" id="cd06529">
    <property type="entry name" value="S24_LexA-like"/>
    <property type="match status" value="1"/>
</dbReference>
<dbReference type="FunFam" id="1.10.10.10:FF:000009">
    <property type="entry name" value="LexA repressor"/>
    <property type="match status" value="1"/>
</dbReference>
<dbReference type="FunFam" id="2.10.109.10:FF:000001">
    <property type="entry name" value="LexA repressor"/>
    <property type="match status" value="1"/>
</dbReference>
<dbReference type="Gene3D" id="2.10.109.10">
    <property type="entry name" value="Umud Fragment, subunit A"/>
    <property type="match status" value="1"/>
</dbReference>
<dbReference type="Gene3D" id="1.10.10.10">
    <property type="entry name" value="Winged helix-like DNA-binding domain superfamily/Winged helix DNA-binding domain"/>
    <property type="match status" value="1"/>
</dbReference>
<dbReference type="HAMAP" id="MF_00015">
    <property type="entry name" value="LexA"/>
    <property type="match status" value="1"/>
</dbReference>
<dbReference type="InterPro" id="IPR006200">
    <property type="entry name" value="LexA"/>
</dbReference>
<dbReference type="InterPro" id="IPR039418">
    <property type="entry name" value="LexA-like"/>
</dbReference>
<dbReference type="InterPro" id="IPR036286">
    <property type="entry name" value="LexA/Signal_pep-like_sf"/>
</dbReference>
<dbReference type="InterPro" id="IPR006199">
    <property type="entry name" value="LexA_DNA-bd_dom"/>
</dbReference>
<dbReference type="InterPro" id="IPR050077">
    <property type="entry name" value="LexA_repressor"/>
</dbReference>
<dbReference type="InterPro" id="IPR006197">
    <property type="entry name" value="Peptidase_S24_LexA"/>
</dbReference>
<dbReference type="InterPro" id="IPR015927">
    <property type="entry name" value="Peptidase_S24_S26A/B/C"/>
</dbReference>
<dbReference type="InterPro" id="IPR036388">
    <property type="entry name" value="WH-like_DNA-bd_sf"/>
</dbReference>
<dbReference type="InterPro" id="IPR036390">
    <property type="entry name" value="WH_DNA-bd_sf"/>
</dbReference>
<dbReference type="NCBIfam" id="TIGR00498">
    <property type="entry name" value="lexA"/>
    <property type="match status" value="1"/>
</dbReference>
<dbReference type="PANTHER" id="PTHR33516">
    <property type="entry name" value="LEXA REPRESSOR"/>
    <property type="match status" value="1"/>
</dbReference>
<dbReference type="PANTHER" id="PTHR33516:SF2">
    <property type="entry name" value="LEXA REPRESSOR-RELATED"/>
    <property type="match status" value="1"/>
</dbReference>
<dbReference type="Pfam" id="PF01726">
    <property type="entry name" value="LexA_DNA_bind"/>
    <property type="match status" value="1"/>
</dbReference>
<dbReference type="Pfam" id="PF00717">
    <property type="entry name" value="Peptidase_S24"/>
    <property type="match status" value="1"/>
</dbReference>
<dbReference type="PRINTS" id="PR00726">
    <property type="entry name" value="LEXASERPTASE"/>
</dbReference>
<dbReference type="SUPFAM" id="SSF51306">
    <property type="entry name" value="LexA/Signal peptidase"/>
    <property type="match status" value="1"/>
</dbReference>
<dbReference type="SUPFAM" id="SSF46785">
    <property type="entry name" value="Winged helix' DNA-binding domain"/>
    <property type="match status" value="1"/>
</dbReference>
<comment type="function">
    <text evidence="1">Represses a number of genes involved in the response to DNA damage (SOS response), including recA and lexA. Binds to the 16 bp palindromic sequence 5'-CTGTATATATATACAG-3'. In the presence of single-stranded DNA, RecA interacts with LexA causing an autocatalytic cleavage which disrupts the DNA-binding part of LexA, leading to derepression of the SOS regulon and eventually DNA repair.</text>
</comment>
<comment type="catalytic activity">
    <reaction evidence="1">
        <text>Hydrolysis of Ala-|-Gly bond in repressor LexA.</text>
        <dbReference type="EC" id="3.4.21.88"/>
    </reaction>
</comment>
<comment type="subunit">
    <text evidence="1">Homodimer.</text>
</comment>
<comment type="similarity">
    <text evidence="1">Belongs to the peptidase S24 family.</text>
</comment>
<reference key="1">
    <citation type="journal article" date="2011" name="J. Bacteriol.">
        <title>Comparative genomics of 28 Salmonella enterica isolates: evidence for CRISPR-mediated adaptive sublineage evolution.</title>
        <authorList>
            <person name="Fricke W.F."/>
            <person name="Mammel M.K."/>
            <person name="McDermott P.F."/>
            <person name="Tartera C."/>
            <person name="White D.G."/>
            <person name="Leclerc J.E."/>
            <person name="Ravel J."/>
            <person name="Cebula T.A."/>
        </authorList>
    </citation>
    <scope>NUCLEOTIDE SEQUENCE [LARGE SCALE GENOMIC DNA]</scope>
    <source>
        <strain>SL476</strain>
    </source>
</reference>
<name>LEXA_SALHS</name>
<protein>
    <recommendedName>
        <fullName evidence="1">LexA repressor</fullName>
        <ecNumber evidence="1">3.4.21.88</ecNumber>
    </recommendedName>
</protein>